<gene>
    <name type="primary">yitO</name>
    <name type="ordered locus">BSU11055</name>
    <name type="ORF">BSU11050/BSU11060</name>
</gene>
<comment type="subcellular location">
    <subcellularLocation>
        <location evidence="2">Cell membrane</location>
        <topology evidence="2">Multi-pass membrane protein</topology>
    </subcellularLocation>
</comment>
<comment type="caution">
    <text evidence="3">Was initially thought to be two separate ORFs named yitO and yitN.</text>
</comment>
<comment type="sequence caution" evidence="2">
    <conflict type="erroneous initiation">
        <sequence resource="EMBL-CDS" id="CAA70623"/>
    </conflict>
    <text>Truncated N-terminus.</text>
</comment>
<comment type="sequence caution" evidence="2">
    <conflict type="frameshift">
        <sequence resource="EMBL-CDS" id="CAA70623"/>
    </conflict>
</comment>
<comment type="sequence caution" evidence="2">
    <conflict type="erroneous initiation">
        <sequence resource="EMBL-CDS" id="CAA70624"/>
    </conflict>
    <text>Truncated N-terminus.</text>
</comment>
<comment type="sequence caution" evidence="2">
    <conflict type="frameshift">
        <sequence resource="EMBL-CDS" id="CAA70624"/>
    </conflict>
</comment>
<reference key="1">
    <citation type="journal article" date="1997" name="Microbiology">
        <title>A Bacillus subtilis chromosome segment at the 100 degrees to 102 degrees position encoding 11 membrane proteins.</title>
        <authorList>
            <person name="Roche B."/>
            <person name="Autret S."/>
            <person name="Levine A."/>
            <person name="Vannier F."/>
            <person name="Medina N."/>
            <person name="Seror S.J."/>
        </authorList>
    </citation>
    <scope>NUCLEOTIDE SEQUENCE [GENOMIC DNA]</scope>
</reference>
<reference key="2">
    <citation type="journal article" date="1997" name="Nature">
        <title>The complete genome sequence of the Gram-positive bacterium Bacillus subtilis.</title>
        <authorList>
            <person name="Kunst F."/>
            <person name="Ogasawara N."/>
            <person name="Moszer I."/>
            <person name="Albertini A.M."/>
            <person name="Alloni G."/>
            <person name="Azevedo V."/>
            <person name="Bertero M.G."/>
            <person name="Bessieres P."/>
            <person name="Bolotin A."/>
            <person name="Borchert S."/>
            <person name="Borriss R."/>
            <person name="Boursier L."/>
            <person name="Brans A."/>
            <person name="Braun M."/>
            <person name="Brignell S.C."/>
            <person name="Bron S."/>
            <person name="Brouillet S."/>
            <person name="Bruschi C.V."/>
            <person name="Caldwell B."/>
            <person name="Capuano V."/>
            <person name="Carter N.M."/>
            <person name="Choi S.-K."/>
            <person name="Codani J.-J."/>
            <person name="Connerton I.F."/>
            <person name="Cummings N.J."/>
            <person name="Daniel R.A."/>
            <person name="Denizot F."/>
            <person name="Devine K.M."/>
            <person name="Duesterhoeft A."/>
            <person name="Ehrlich S.D."/>
            <person name="Emmerson P.T."/>
            <person name="Entian K.-D."/>
            <person name="Errington J."/>
            <person name="Fabret C."/>
            <person name="Ferrari E."/>
            <person name="Foulger D."/>
            <person name="Fritz C."/>
            <person name="Fujita M."/>
            <person name="Fujita Y."/>
            <person name="Fuma S."/>
            <person name="Galizzi A."/>
            <person name="Galleron N."/>
            <person name="Ghim S.-Y."/>
            <person name="Glaser P."/>
            <person name="Goffeau A."/>
            <person name="Golightly E.J."/>
            <person name="Grandi G."/>
            <person name="Guiseppi G."/>
            <person name="Guy B.J."/>
            <person name="Haga K."/>
            <person name="Haiech J."/>
            <person name="Harwood C.R."/>
            <person name="Henaut A."/>
            <person name="Hilbert H."/>
            <person name="Holsappel S."/>
            <person name="Hosono S."/>
            <person name="Hullo M.-F."/>
            <person name="Itaya M."/>
            <person name="Jones L.-M."/>
            <person name="Joris B."/>
            <person name="Karamata D."/>
            <person name="Kasahara Y."/>
            <person name="Klaerr-Blanchard M."/>
            <person name="Klein C."/>
            <person name="Kobayashi Y."/>
            <person name="Koetter P."/>
            <person name="Koningstein G."/>
            <person name="Krogh S."/>
            <person name="Kumano M."/>
            <person name="Kurita K."/>
            <person name="Lapidus A."/>
            <person name="Lardinois S."/>
            <person name="Lauber J."/>
            <person name="Lazarevic V."/>
            <person name="Lee S.-M."/>
            <person name="Levine A."/>
            <person name="Liu H."/>
            <person name="Masuda S."/>
            <person name="Mauel C."/>
            <person name="Medigue C."/>
            <person name="Medina N."/>
            <person name="Mellado R.P."/>
            <person name="Mizuno M."/>
            <person name="Moestl D."/>
            <person name="Nakai S."/>
            <person name="Noback M."/>
            <person name="Noone D."/>
            <person name="O'Reilly M."/>
            <person name="Ogawa K."/>
            <person name="Ogiwara A."/>
            <person name="Oudega B."/>
            <person name="Park S.-H."/>
            <person name="Parro V."/>
            <person name="Pohl T.M."/>
            <person name="Portetelle D."/>
            <person name="Porwollik S."/>
            <person name="Prescott A.M."/>
            <person name="Presecan E."/>
            <person name="Pujic P."/>
            <person name="Purnelle B."/>
            <person name="Rapoport G."/>
            <person name="Rey M."/>
            <person name="Reynolds S."/>
            <person name="Rieger M."/>
            <person name="Rivolta C."/>
            <person name="Rocha E."/>
            <person name="Roche B."/>
            <person name="Rose M."/>
            <person name="Sadaie Y."/>
            <person name="Sato T."/>
            <person name="Scanlan E."/>
            <person name="Schleich S."/>
            <person name="Schroeter R."/>
            <person name="Scoffone F."/>
            <person name="Sekiguchi J."/>
            <person name="Sekowska A."/>
            <person name="Seror S.J."/>
            <person name="Serror P."/>
            <person name="Shin B.-S."/>
            <person name="Soldo B."/>
            <person name="Sorokin A."/>
            <person name="Tacconi E."/>
            <person name="Takagi T."/>
            <person name="Takahashi H."/>
            <person name="Takemaru K."/>
            <person name="Takeuchi M."/>
            <person name="Tamakoshi A."/>
            <person name="Tanaka T."/>
            <person name="Terpstra P."/>
            <person name="Tognoni A."/>
            <person name="Tosato V."/>
            <person name="Uchiyama S."/>
            <person name="Vandenbol M."/>
            <person name="Vannier F."/>
            <person name="Vassarotti A."/>
            <person name="Viari A."/>
            <person name="Wambutt R."/>
            <person name="Wedler E."/>
            <person name="Wedler H."/>
            <person name="Weitzenegger T."/>
            <person name="Winters P."/>
            <person name="Wipat A."/>
            <person name="Yamamoto H."/>
            <person name="Yamane K."/>
            <person name="Yasumoto K."/>
            <person name="Yata K."/>
            <person name="Yoshida K."/>
            <person name="Yoshikawa H.-F."/>
            <person name="Zumstein E."/>
            <person name="Yoshikawa H."/>
            <person name="Danchin A."/>
        </authorList>
    </citation>
    <scope>NUCLEOTIDE SEQUENCE [LARGE SCALE GENOMIC DNA]</scope>
    <source>
        <strain>168</strain>
    </source>
</reference>
<reference key="3">
    <citation type="journal article" date="2009" name="Microbiology">
        <title>From a consortium sequence to a unified sequence: the Bacillus subtilis 168 reference genome a decade later.</title>
        <authorList>
            <person name="Barbe V."/>
            <person name="Cruveiller S."/>
            <person name="Kunst F."/>
            <person name="Lenoble P."/>
            <person name="Meurice G."/>
            <person name="Sekowska A."/>
            <person name="Vallenet D."/>
            <person name="Wang T."/>
            <person name="Moszer I."/>
            <person name="Medigue C."/>
            <person name="Danchin A."/>
        </authorList>
    </citation>
    <scope>SEQUENCE REVISION</scope>
</reference>
<feature type="chain" id="PRO_0000049586" description="Uncharacterized protein YitO">
    <location>
        <begin position="1"/>
        <end position="309"/>
    </location>
</feature>
<feature type="transmembrane region" description="Helical" evidence="1">
    <location>
        <begin position="28"/>
        <end position="48"/>
    </location>
</feature>
<feature type="transmembrane region" description="Helical" evidence="1">
    <location>
        <begin position="73"/>
        <end position="93"/>
    </location>
</feature>
<feature type="transmembrane region" description="Helical" evidence="1">
    <location>
        <begin position="113"/>
        <end position="133"/>
    </location>
</feature>
<feature type="transmembrane region" description="Helical" evidence="1">
    <location>
        <begin position="157"/>
        <end position="177"/>
    </location>
</feature>
<feature type="transmembrane region" description="Helical" evidence="1">
    <location>
        <begin position="220"/>
        <end position="240"/>
    </location>
</feature>
<feature type="transmembrane region" description="Helical" evidence="1">
    <location>
        <begin position="259"/>
        <end position="279"/>
    </location>
</feature>
<protein>
    <recommendedName>
        <fullName>Uncharacterized protein YitO</fullName>
    </recommendedName>
</protein>
<accession>O06750</accession>
<accession>O06749</accession>
<dbReference type="EMBL" id="Y09476">
    <property type="protein sequence ID" value="CAA70624.1"/>
    <property type="status" value="ALT_SEQ"/>
    <property type="molecule type" value="Genomic_DNA"/>
</dbReference>
<dbReference type="EMBL" id="Y09476">
    <property type="protein sequence ID" value="CAA70623.1"/>
    <property type="status" value="ALT_SEQ"/>
    <property type="molecule type" value="Genomic_DNA"/>
</dbReference>
<dbReference type="EMBL" id="AL009126">
    <property type="protein sequence ID" value="CAB12946.2"/>
    <property type="molecule type" value="Genomic_DNA"/>
</dbReference>
<dbReference type="PIR" id="G69840">
    <property type="entry name" value="G69840"/>
</dbReference>
<dbReference type="PIR" id="H69840">
    <property type="entry name" value="H69840"/>
</dbReference>
<dbReference type="RefSeq" id="NP_388987.2">
    <property type="nucleotide sequence ID" value="NC_000964.3"/>
</dbReference>
<dbReference type="RefSeq" id="WP_003233028.1">
    <property type="nucleotide sequence ID" value="NZ_OZ025638.1"/>
</dbReference>
<dbReference type="FunCoup" id="O06750">
    <property type="interactions" value="2"/>
</dbReference>
<dbReference type="STRING" id="224308.BSU11055"/>
<dbReference type="TCDB" id="9.A.31.1.4">
    <property type="family name" value="the putative sdpab peptide antibiotic-like killing factor exporter (sdpab) family"/>
</dbReference>
<dbReference type="PaxDb" id="224308-BSU11055"/>
<dbReference type="EnsemblBacteria" id="CAB12946">
    <property type="protein sequence ID" value="CAB12946"/>
    <property type="gene ID" value="BSU_11055"/>
</dbReference>
<dbReference type="GeneID" id="936373"/>
<dbReference type="KEGG" id="bsu:BSU11055"/>
<dbReference type="PATRIC" id="fig|224308.179.peg.1187"/>
<dbReference type="eggNOG" id="ENOG502ZGQB">
    <property type="taxonomic scope" value="Bacteria"/>
</dbReference>
<dbReference type="InParanoid" id="O06750"/>
<dbReference type="OrthoDB" id="128729at2"/>
<dbReference type="BioCyc" id="BSUB:BSU11055-MONOMER"/>
<dbReference type="Proteomes" id="UP000001570">
    <property type="component" value="Chromosome"/>
</dbReference>
<dbReference type="GO" id="GO:0005886">
    <property type="term" value="C:plasma membrane"/>
    <property type="evidence" value="ECO:0007669"/>
    <property type="project" value="UniProtKB-SubCell"/>
</dbReference>
<dbReference type="InterPro" id="IPR011020">
    <property type="entry name" value="HTTM-like"/>
</dbReference>
<dbReference type="InterPro" id="IPR023894">
    <property type="entry name" value="Sporulation_SdpB"/>
</dbReference>
<dbReference type="InterPro" id="IPR052964">
    <property type="entry name" value="Sporulation_signal_mat"/>
</dbReference>
<dbReference type="NCBIfam" id="TIGR04033">
    <property type="entry name" value="export_SdpB"/>
    <property type="match status" value="1"/>
</dbReference>
<dbReference type="PANTHER" id="PTHR39535:SF2">
    <property type="entry name" value="HTTM DOMAIN-CONTAINING PROTEIN"/>
    <property type="match status" value="1"/>
</dbReference>
<dbReference type="PANTHER" id="PTHR39535">
    <property type="entry name" value="SPORULATION-DELAYING PROTEIN SDPB"/>
    <property type="match status" value="1"/>
</dbReference>
<dbReference type="SMART" id="SM00752">
    <property type="entry name" value="HTTM"/>
    <property type="match status" value="1"/>
</dbReference>
<organism>
    <name type="scientific">Bacillus subtilis (strain 168)</name>
    <dbReference type="NCBI Taxonomy" id="224308"/>
    <lineage>
        <taxon>Bacteria</taxon>
        <taxon>Bacillati</taxon>
        <taxon>Bacillota</taxon>
        <taxon>Bacilli</taxon>
        <taxon>Bacillales</taxon>
        <taxon>Bacillaceae</taxon>
        <taxon>Bacillus</taxon>
    </lineage>
</organism>
<evidence type="ECO:0000255" key="1"/>
<evidence type="ECO:0000305" key="2"/>
<evidence type="ECO:0000305" key="3">
    <source>
    </source>
</evidence>
<sequence>MLENIKQTITRWDERNPWTNVYGLARSIIALSSLLTLLINHPSLIMKPASGISSYPACKMNLSLFCLGENNYMMLNLFRWVCIAILVLVVIGWRPRITGVLHWYVSYSLQSSLIVIDGGEQAAAVMTFLLLPITLTDPRKWHWSTRPIEGKRTLGKITAFISYFVIRIQVAVLYFHSTVAKLSQQEWVDGTAVYYFAQEKTIGFNGFFQALTKPIVTSPFVVIPTWGTLLVQIVIFAALFAPKKHWRLILIIAVFMHEIFAVMLGLISFSIIMAGILILYLTPIDSTIQFTYIRRLLWNKKHKKGEVSV</sequence>
<name>YITO_BACSU</name>
<proteinExistence type="predicted"/>
<keyword id="KW-1003">Cell membrane</keyword>
<keyword id="KW-0472">Membrane</keyword>
<keyword id="KW-1185">Reference proteome</keyword>
<keyword id="KW-0812">Transmembrane</keyword>
<keyword id="KW-1133">Transmembrane helix</keyword>